<comment type="function">
    <text evidence="1">One of the primary rRNA binding proteins, it binds directly to 16S rRNA where it nucleates assembly of the head domain of the 30S subunit.</text>
</comment>
<comment type="subunit">
    <text>Part of the 30S ribosomal subunit.</text>
</comment>
<comment type="subcellular location">
    <subcellularLocation>
        <location>Plastid</location>
        <location>Chloroplast</location>
    </subcellularLocation>
</comment>
<comment type="similarity">
    <text evidence="3">Belongs to the universal ribosomal protein uS7 family.</text>
</comment>
<geneLocation type="chloroplast"/>
<evidence type="ECO:0000250" key="1"/>
<evidence type="ECO:0000255" key="2">
    <source>
        <dbReference type="HAMAP-Rule" id="MF_00480"/>
    </source>
</evidence>
<evidence type="ECO:0000305" key="3"/>
<organism>
    <name type="scientific">Triticum aestivum</name>
    <name type="common">Wheat</name>
    <dbReference type="NCBI Taxonomy" id="4565"/>
    <lineage>
        <taxon>Eukaryota</taxon>
        <taxon>Viridiplantae</taxon>
        <taxon>Streptophyta</taxon>
        <taxon>Embryophyta</taxon>
        <taxon>Tracheophyta</taxon>
        <taxon>Spermatophyta</taxon>
        <taxon>Magnoliopsida</taxon>
        <taxon>Liliopsida</taxon>
        <taxon>Poales</taxon>
        <taxon>Poaceae</taxon>
        <taxon>BOP clade</taxon>
        <taxon>Pooideae</taxon>
        <taxon>Triticodae</taxon>
        <taxon>Triticeae</taxon>
        <taxon>Triticinae</taxon>
        <taxon>Triticum</taxon>
    </lineage>
</organism>
<feature type="chain" id="PRO_0000124515" description="Small ribosomal subunit protein uS7cz/uS7cy">
    <location>
        <begin position="1"/>
        <end position="156"/>
    </location>
</feature>
<protein>
    <recommendedName>
        <fullName evidence="2">Small ribosomal subunit protein uS7cz/uS7cy</fullName>
    </recommendedName>
    <alternativeName>
        <fullName>30S ribosomal protein S7, chloroplastic</fullName>
    </alternativeName>
</protein>
<reference key="1">
    <citation type="journal article" date="2000" name="Plant Mol. Biol. Rep.">
        <title>Chinese spring wheat (Triticum aestivum L.) chloroplast genome: complete sequence and contig clones.</title>
        <authorList>
            <person name="Ogihara Y."/>
            <person name="Isono K."/>
            <person name="Kojima T."/>
            <person name="Endo A."/>
            <person name="Hanaoka M."/>
            <person name="Shiina T."/>
            <person name="Terachi T."/>
            <person name="Utsugi S."/>
            <person name="Murata M."/>
            <person name="Mori N."/>
            <person name="Takumi S."/>
            <person name="Ikeo K."/>
            <person name="Gojobori T."/>
            <person name="Murai R."/>
            <person name="Murai K."/>
            <person name="Matsuoka Y."/>
            <person name="Ohnishi Y."/>
            <person name="Tajiri H."/>
            <person name="Tsunewaki K."/>
        </authorList>
    </citation>
    <scope>NUCLEOTIDE SEQUENCE [LARGE SCALE GENOMIC DNA]</scope>
    <source>
        <strain>cv. Chinese Spring</strain>
    </source>
</reference>
<sequence length="156" mass="17629">MSRRGTAEKRTAKSDPIFRNRLVNMVVNRIMKDGKKSLAYQILYRAVKKIQQKTETNPLLVLRQAIRRVTPNIGVKTRRNKKGSTRKVPIEIGSKQGRALAIRWLLEASQKRPGRNMAFKLSSELVDAAKGGGGAIRKKEATHRMAEANRALAHFR</sequence>
<dbReference type="EMBL" id="AB042240">
    <property type="protein sequence ID" value="BAB47078.1"/>
    <property type="molecule type" value="Genomic_DNA"/>
</dbReference>
<dbReference type="EMBL" id="AB042240">
    <property type="protein sequence ID" value="BAB47093.1"/>
    <property type="molecule type" value="Genomic_DNA"/>
</dbReference>
<dbReference type="SMR" id="P62733"/>
<dbReference type="STRING" id="4565.P62733"/>
<dbReference type="PaxDb" id="4565-EPlTAEP00000010053"/>
<dbReference type="KEGG" id="taes:803088"/>
<dbReference type="KEGG" id="taes:803210"/>
<dbReference type="eggNOG" id="KOG3291">
    <property type="taxonomic scope" value="Eukaryota"/>
</dbReference>
<dbReference type="Proteomes" id="UP000019116">
    <property type="component" value="Chloroplast"/>
</dbReference>
<dbReference type="ExpressionAtlas" id="P62733">
    <property type="expression patterns" value="baseline"/>
</dbReference>
<dbReference type="GO" id="GO:0009507">
    <property type="term" value="C:chloroplast"/>
    <property type="evidence" value="ECO:0007669"/>
    <property type="project" value="UniProtKB-SubCell"/>
</dbReference>
<dbReference type="GO" id="GO:0005840">
    <property type="term" value="C:ribosome"/>
    <property type="evidence" value="ECO:0000318"/>
    <property type="project" value="GO_Central"/>
</dbReference>
<dbReference type="GO" id="GO:0015935">
    <property type="term" value="C:small ribosomal subunit"/>
    <property type="evidence" value="ECO:0007669"/>
    <property type="project" value="InterPro"/>
</dbReference>
<dbReference type="GO" id="GO:0003729">
    <property type="term" value="F:mRNA binding"/>
    <property type="evidence" value="ECO:0000318"/>
    <property type="project" value="GO_Central"/>
</dbReference>
<dbReference type="GO" id="GO:0019843">
    <property type="term" value="F:rRNA binding"/>
    <property type="evidence" value="ECO:0000318"/>
    <property type="project" value="GO_Central"/>
</dbReference>
<dbReference type="GO" id="GO:0003735">
    <property type="term" value="F:structural constituent of ribosome"/>
    <property type="evidence" value="ECO:0000318"/>
    <property type="project" value="GO_Central"/>
</dbReference>
<dbReference type="GO" id="GO:0000028">
    <property type="term" value="P:ribosomal small subunit assembly"/>
    <property type="evidence" value="ECO:0000318"/>
    <property type="project" value="GO_Central"/>
</dbReference>
<dbReference type="GO" id="GO:0006412">
    <property type="term" value="P:translation"/>
    <property type="evidence" value="ECO:0000318"/>
    <property type="project" value="GO_Central"/>
</dbReference>
<dbReference type="CDD" id="cd14871">
    <property type="entry name" value="uS7_Chloroplast"/>
    <property type="match status" value="1"/>
</dbReference>
<dbReference type="FunFam" id="1.10.455.10:FF:000001">
    <property type="entry name" value="30S ribosomal protein S7"/>
    <property type="match status" value="1"/>
</dbReference>
<dbReference type="Gene3D" id="1.10.455.10">
    <property type="entry name" value="Ribosomal protein S7 domain"/>
    <property type="match status" value="1"/>
</dbReference>
<dbReference type="HAMAP" id="MF_00480_B">
    <property type="entry name" value="Ribosomal_uS7_B"/>
    <property type="match status" value="1"/>
</dbReference>
<dbReference type="InterPro" id="IPR000235">
    <property type="entry name" value="Ribosomal_uS7"/>
</dbReference>
<dbReference type="InterPro" id="IPR005717">
    <property type="entry name" value="Ribosomal_uS7_bac/org-type"/>
</dbReference>
<dbReference type="InterPro" id="IPR020606">
    <property type="entry name" value="Ribosomal_uS7_CS"/>
</dbReference>
<dbReference type="InterPro" id="IPR023798">
    <property type="entry name" value="Ribosomal_uS7_dom"/>
</dbReference>
<dbReference type="InterPro" id="IPR036823">
    <property type="entry name" value="Ribosomal_uS7_dom_sf"/>
</dbReference>
<dbReference type="NCBIfam" id="TIGR01029">
    <property type="entry name" value="rpsG_bact"/>
    <property type="match status" value="1"/>
</dbReference>
<dbReference type="PANTHER" id="PTHR11205">
    <property type="entry name" value="RIBOSOMAL PROTEIN S7"/>
    <property type="match status" value="1"/>
</dbReference>
<dbReference type="Pfam" id="PF00177">
    <property type="entry name" value="Ribosomal_S7"/>
    <property type="match status" value="1"/>
</dbReference>
<dbReference type="PIRSF" id="PIRSF002122">
    <property type="entry name" value="RPS7p_RPS7a_RPS5e_RPS7o"/>
    <property type="match status" value="1"/>
</dbReference>
<dbReference type="SUPFAM" id="SSF47973">
    <property type="entry name" value="Ribosomal protein S7"/>
    <property type="match status" value="1"/>
</dbReference>
<dbReference type="PROSITE" id="PS00052">
    <property type="entry name" value="RIBOSOMAL_S7"/>
    <property type="match status" value="1"/>
</dbReference>
<proteinExistence type="inferred from homology"/>
<gene>
    <name type="primary">rps7-A</name>
</gene>
<gene>
    <name type="primary">rps7-B</name>
</gene>
<keyword id="KW-0150">Chloroplast</keyword>
<keyword id="KW-0934">Plastid</keyword>
<keyword id="KW-1185">Reference proteome</keyword>
<keyword id="KW-0687">Ribonucleoprotein</keyword>
<keyword id="KW-0689">Ribosomal protein</keyword>
<keyword id="KW-0694">RNA-binding</keyword>
<keyword id="KW-0699">rRNA-binding</keyword>
<accession>P62733</accession>
<accession>P05424</accession>
<name>RR7_WHEAT</name>